<feature type="chain" id="PRO_1000094923" description="Large-conductance mechanosensitive channel">
    <location>
        <begin position="1"/>
        <end position="137"/>
    </location>
</feature>
<feature type="transmembrane region" description="Helical" evidence="1">
    <location>
        <begin position="10"/>
        <end position="30"/>
    </location>
</feature>
<feature type="transmembrane region" description="Helical" evidence="1">
    <location>
        <begin position="76"/>
        <end position="96"/>
    </location>
</feature>
<accession>B4TJY1</accession>
<dbReference type="EMBL" id="CP001120">
    <property type="protein sequence ID" value="ACF66665.1"/>
    <property type="molecule type" value="Genomic_DNA"/>
</dbReference>
<dbReference type="RefSeq" id="WP_000008119.1">
    <property type="nucleotide sequence ID" value="NC_011083.1"/>
</dbReference>
<dbReference type="SMR" id="B4TJY1"/>
<dbReference type="KEGG" id="seh:SeHA_C3714"/>
<dbReference type="HOGENOM" id="CLU_095787_0_0_6"/>
<dbReference type="Proteomes" id="UP000001866">
    <property type="component" value="Chromosome"/>
</dbReference>
<dbReference type="GO" id="GO:0005886">
    <property type="term" value="C:plasma membrane"/>
    <property type="evidence" value="ECO:0007669"/>
    <property type="project" value="UniProtKB-SubCell"/>
</dbReference>
<dbReference type="GO" id="GO:0008381">
    <property type="term" value="F:mechanosensitive monoatomic ion channel activity"/>
    <property type="evidence" value="ECO:0007669"/>
    <property type="project" value="UniProtKB-UniRule"/>
</dbReference>
<dbReference type="FunFam" id="1.10.1200.120:FF:000001">
    <property type="entry name" value="Large-conductance mechanosensitive channel"/>
    <property type="match status" value="1"/>
</dbReference>
<dbReference type="Gene3D" id="1.10.1200.120">
    <property type="entry name" value="Large-conductance mechanosensitive channel, MscL, domain 1"/>
    <property type="match status" value="1"/>
</dbReference>
<dbReference type="HAMAP" id="MF_00115">
    <property type="entry name" value="MscL"/>
    <property type="match status" value="1"/>
</dbReference>
<dbReference type="InterPro" id="IPR019823">
    <property type="entry name" value="Mechanosensitive_channel_CS"/>
</dbReference>
<dbReference type="InterPro" id="IPR001185">
    <property type="entry name" value="MS_channel"/>
</dbReference>
<dbReference type="InterPro" id="IPR037673">
    <property type="entry name" value="MSC/AndL"/>
</dbReference>
<dbReference type="InterPro" id="IPR036019">
    <property type="entry name" value="MscL_channel"/>
</dbReference>
<dbReference type="NCBIfam" id="TIGR00220">
    <property type="entry name" value="mscL"/>
    <property type="match status" value="1"/>
</dbReference>
<dbReference type="NCBIfam" id="NF001841">
    <property type="entry name" value="PRK00567.1-1"/>
    <property type="match status" value="1"/>
</dbReference>
<dbReference type="NCBIfam" id="NF001843">
    <property type="entry name" value="PRK00567.1-4"/>
    <property type="match status" value="1"/>
</dbReference>
<dbReference type="PANTHER" id="PTHR30266:SF2">
    <property type="entry name" value="LARGE-CONDUCTANCE MECHANOSENSITIVE CHANNEL"/>
    <property type="match status" value="1"/>
</dbReference>
<dbReference type="PANTHER" id="PTHR30266">
    <property type="entry name" value="MECHANOSENSITIVE CHANNEL MSCL"/>
    <property type="match status" value="1"/>
</dbReference>
<dbReference type="Pfam" id="PF01741">
    <property type="entry name" value="MscL"/>
    <property type="match status" value="1"/>
</dbReference>
<dbReference type="PRINTS" id="PR01264">
    <property type="entry name" value="MECHCHANNEL"/>
</dbReference>
<dbReference type="SUPFAM" id="SSF81330">
    <property type="entry name" value="Gated mechanosensitive channel"/>
    <property type="match status" value="1"/>
</dbReference>
<dbReference type="PROSITE" id="PS01327">
    <property type="entry name" value="MSCL"/>
    <property type="match status" value="1"/>
</dbReference>
<gene>
    <name evidence="1" type="primary">mscL</name>
    <name type="ordered locus">SeHA_C3714</name>
</gene>
<protein>
    <recommendedName>
        <fullName evidence="1">Large-conductance mechanosensitive channel</fullName>
    </recommendedName>
</protein>
<evidence type="ECO:0000255" key="1">
    <source>
        <dbReference type="HAMAP-Rule" id="MF_00115"/>
    </source>
</evidence>
<comment type="function">
    <text evidence="1">Channel that opens in response to stretch forces in the membrane lipid bilayer. May participate in the regulation of osmotic pressure changes within the cell.</text>
</comment>
<comment type="subunit">
    <text evidence="1">Homopentamer.</text>
</comment>
<comment type="subcellular location">
    <subcellularLocation>
        <location evidence="1">Cell inner membrane</location>
        <topology evidence="1">Multi-pass membrane protein</topology>
    </subcellularLocation>
</comment>
<comment type="similarity">
    <text evidence="1">Belongs to the MscL family.</text>
</comment>
<sequence length="137" mass="15074">MSFIKEFREFAMRGNVVDLAVGVIIGAAFGKIVSSLVADIIMPPLGLLIGGIDFKQFAFTLREAQGDIPAVVMHYGVFIQNVFDFVIVAFAIFVAIKLINRLNRKKAEEPAAPPAPSKEEVLLGEIRDLLKEQNNRS</sequence>
<name>MSCL_SALHS</name>
<keyword id="KW-0997">Cell inner membrane</keyword>
<keyword id="KW-1003">Cell membrane</keyword>
<keyword id="KW-0407">Ion channel</keyword>
<keyword id="KW-0406">Ion transport</keyword>
<keyword id="KW-0472">Membrane</keyword>
<keyword id="KW-0812">Transmembrane</keyword>
<keyword id="KW-1133">Transmembrane helix</keyword>
<keyword id="KW-0813">Transport</keyword>
<organism>
    <name type="scientific">Salmonella heidelberg (strain SL476)</name>
    <dbReference type="NCBI Taxonomy" id="454169"/>
    <lineage>
        <taxon>Bacteria</taxon>
        <taxon>Pseudomonadati</taxon>
        <taxon>Pseudomonadota</taxon>
        <taxon>Gammaproteobacteria</taxon>
        <taxon>Enterobacterales</taxon>
        <taxon>Enterobacteriaceae</taxon>
        <taxon>Salmonella</taxon>
    </lineage>
</organism>
<reference key="1">
    <citation type="journal article" date="2011" name="J. Bacteriol.">
        <title>Comparative genomics of 28 Salmonella enterica isolates: evidence for CRISPR-mediated adaptive sublineage evolution.</title>
        <authorList>
            <person name="Fricke W.F."/>
            <person name="Mammel M.K."/>
            <person name="McDermott P.F."/>
            <person name="Tartera C."/>
            <person name="White D.G."/>
            <person name="Leclerc J.E."/>
            <person name="Ravel J."/>
            <person name="Cebula T.A."/>
        </authorList>
    </citation>
    <scope>NUCLEOTIDE SEQUENCE [LARGE SCALE GENOMIC DNA]</scope>
    <source>
        <strain>SL476</strain>
    </source>
</reference>
<proteinExistence type="inferred from homology"/>